<reference key="1">
    <citation type="journal article" date="1991" name="Mol. Gen. Genet.">
        <title>Molecular cloning and nucleotide sequence of the glycogen branching enzyme gene (glgB) from Bacillus stearothermophilus and expression in Escherichia coli and Bacillus subtilis.</title>
        <authorList>
            <person name="Kiel J.A.K.W."/>
            <person name="Boels J.M."/>
            <person name="Beldman G."/>
            <person name="Venema G."/>
        </authorList>
    </citation>
    <scope>NUCLEOTIDE SEQUENCE [GENOMIC DNA]</scope>
</reference>
<keyword id="KW-1003">Cell membrane</keyword>
<keyword id="KW-0472">Membrane</keyword>
<keyword id="KW-0812">Transmembrane</keyword>
<keyword id="KW-1133">Transmembrane helix</keyword>
<proteinExistence type="predicted"/>
<name>YGLB_GEOSE</name>
<sequence length="108" mass="12046">MSPIQYDYHHLPHVKTQNQSKKTLWITLVLTLFFTIVEIVGGLLSNSLALLSDSAHMASDVLALGLSMIALYLAMRPPNHRFTFGYLRFEIITSFLNGLTLAIISIGI</sequence>
<comment type="subcellular location">
    <subcellularLocation>
        <location evidence="2">Cell membrane</location>
        <topology evidence="2">Multi-pass membrane protein</topology>
    </subcellularLocation>
</comment>
<comment type="similarity">
    <text evidence="2">To cation A.eutrophus efflux system protein CzcD.</text>
</comment>
<comment type="sequence caution" evidence="2">
    <conflict type="erroneous initiation">
        <sequence resource="EMBL-CDS" id="AAA22481"/>
    </conflict>
</comment>
<dbReference type="EMBL" id="M35089">
    <property type="protein sequence ID" value="AAA22481.2"/>
    <property type="status" value="ALT_INIT"/>
    <property type="molecule type" value="Genomic_DNA"/>
</dbReference>
<dbReference type="SMR" id="P30540"/>
<dbReference type="GO" id="GO:0005886">
    <property type="term" value="C:plasma membrane"/>
    <property type="evidence" value="ECO:0007669"/>
    <property type="project" value="UniProtKB-SubCell"/>
</dbReference>
<dbReference type="GO" id="GO:0005385">
    <property type="term" value="F:zinc ion transmembrane transporter activity"/>
    <property type="evidence" value="ECO:0007669"/>
    <property type="project" value="TreeGrafter"/>
</dbReference>
<dbReference type="Gene3D" id="1.20.1510.10">
    <property type="entry name" value="Cation efflux protein transmembrane domain"/>
    <property type="match status" value="1"/>
</dbReference>
<dbReference type="InterPro" id="IPR002524">
    <property type="entry name" value="Cation_efflux"/>
</dbReference>
<dbReference type="InterPro" id="IPR027469">
    <property type="entry name" value="Cation_efflux_TMD_sf"/>
</dbReference>
<dbReference type="InterPro" id="IPR050681">
    <property type="entry name" value="CDF/SLC30A"/>
</dbReference>
<dbReference type="NCBIfam" id="TIGR01297">
    <property type="entry name" value="CDF"/>
    <property type="match status" value="1"/>
</dbReference>
<dbReference type="PANTHER" id="PTHR11562">
    <property type="entry name" value="CATION EFFLUX PROTEIN/ ZINC TRANSPORTER"/>
    <property type="match status" value="1"/>
</dbReference>
<dbReference type="PANTHER" id="PTHR11562:SF17">
    <property type="entry name" value="RE54080P-RELATED"/>
    <property type="match status" value="1"/>
</dbReference>
<dbReference type="Pfam" id="PF01545">
    <property type="entry name" value="Cation_efflux"/>
    <property type="match status" value="1"/>
</dbReference>
<dbReference type="SUPFAM" id="SSF161111">
    <property type="entry name" value="Cation efflux protein transmembrane domain-like"/>
    <property type="match status" value="1"/>
</dbReference>
<protein>
    <recommendedName>
        <fullName>Uncharacterized protein in glgB 5'region</fullName>
    </recommendedName>
</protein>
<organism>
    <name type="scientific">Geobacillus stearothermophilus</name>
    <name type="common">Bacillus stearothermophilus</name>
    <dbReference type="NCBI Taxonomy" id="1422"/>
    <lineage>
        <taxon>Bacteria</taxon>
        <taxon>Bacillati</taxon>
        <taxon>Bacillota</taxon>
        <taxon>Bacilli</taxon>
        <taxon>Bacillales</taxon>
        <taxon>Anoxybacillaceae</taxon>
        <taxon>Geobacillus</taxon>
    </lineage>
</organism>
<accession>P30540</accession>
<evidence type="ECO:0000255" key="1"/>
<evidence type="ECO:0000305" key="2"/>
<feature type="chain" id="PRO_0000066236" description="Uncharacterized protein in glgB 5'region">
    <location>
        <begin position="1"/>
        <end position="108" status="greater than"/>
    </location>
</feature>
<feature type="transmembrane region" description="Helical" evidence="1">
    <location>
        <begin position="24"/>
        <end position="44"/>
    </location>
</feature>
<feature type="transmembrane region" description="Helical" evidence="1">
    <location>
        <begin position="55"/>
        <end position="75"/>
    </location>
</feature>
<feature type="transmembrane region" description="Helical" evidence="1">
    <location>
        <begin position="88"/>
        <end position="108"/>
    </location>
</feature>
<feature type="non-terminal residue">
    <location>
        <position position="108"/>
    </location>
</feature>